<organism evidence="9">
    <name type="scientific">Caenorhabditis elegans</name>
    <dbReference type="NCBI Taxonomy" id="6239"/>
    <lineage>
        <taxon>Eukaryota</taxon>
        <taxon>Metazoa</taxon>
        <taxon>Ecdysozoa</taxon>
        <taxon>Nematoda</taxon>
        <taxon>Chromadorea</taxon>
        <taxon>Rhabditida</taxon>
        <taxon>Rhabditina</taxon>
        <taxon>Rhabditomorpha</taxon>
        <taxon>Rhabditoidea</taxon>
        <taxon>Rhabditidae</taxon>
        <taxon>Peloderinae</taxon>
        <taxon>Caenorhabditis</taxon>
    </lineage>
</organism>
<dbReference type="EMBL" id="AF370362">
    <property type="protein sequence ID" value="AAK52515.1"/>
    <property type="molecule type" value="mRNA"/>
</dbReference>
<dbReference type="EMBL" id="BX284605">
    <property type="protein sequence ID" value="CAB03258.2"/>
    <property type="molecule type" value="Genomic_DNA"/>
</dbReference>
<dbReference type="PIR" id="T24292">
    <property type="entry name" value="T24292"/>
</dbReference>
<dbReference type="RefSeq" id="NP_506391.2">
    <property type="nucleotide sequence ID" value="NM_073990.3"/>
</dbReference>
<dbReference type="SMR" id="P90953"/>
<dbReference type="BioGRID" id="44875">
    <property type="interactions" value="2"/>
</dbReference>
<dbReference type="FunCoup" id="P90953">
    <property type="interactions" value="28"/>
</dbReference>
<dbReference type="IntAct" id="P90953">
    <property type="interactions" value="2"/>
</dbReference>
<dbReference type="STRING" id="6239.T01D3.2.1"/>
<dbReference type="PaxDb" id="6239-T01D3.2"/>
<dbReference type="EnsemblMetazoa" id="T01D3.2.1">
    <property type="protein sequence ID" value="T01D3.2.1"/>
    <property type="gene ID" value="WBGene00011327"/>
</dbReference>
<dbReference type="GeneID" id="179860"/>
<dbReference type="KEGG" id="cel:CELE_T01D3.2"/>
<dbReference type="UCSC" id="T01D3.2">
    <property type="organism name" value="c. elegans"/>
</dbReference>
<dbReference type="AGR" id="WB:WBGene00011327"/>
<dbReference type="CTD" id="179860"/>
<dbReference type="WormBase" id="T01D3.2">
    <property type="protein sequence ID" value="CE30446"/>
    <property type="gene ID" value="WBGene00011327"/>
    <property type="gene designation" value="hlh-34"/>
</dbReference>
<dbReference type="eggNOG" id="KOG3559">
    <property type="taxonomic scope" value="Eukaryota"/>
</dbReference>
<dbReference type="HOGENOM" id="CLU_863913_0_0_1"/>
<dbReference type="InParanoid" id="P90953"/>
<dbReference type="OMA" id="KMHFDIF"/>
<dbReference type="OrthoDB" id="6021714at2759"/>
<dbReference type="PhylomeDB" id="P90953"/>
<dbReference type="PRO" id="PR:P90953"/>
<dbReference type="Proteomes" id="UP000001940">
    <property type="component" value="Chromosome V"/>
</dbReference>
<dbReference type="Bgee" id="WBGene00011327">
    <property type="expression patterns" value="Expressed in pharyngeal muscle cell (C elegans) and 1 other cell type or tissue"/>
</dbReference>
<dbReference type="GO" id="GO:0005634">
    <property type="term" value="C:nucleus"/>
    <property type="evidence" value="ECO:0007669"/>
    <property type="project" value="UniProtKB-SubCell"/>
</dbReference>
<dbReference type="GO" id="GO:0003677">
    <property type="term" value="F:DNA binding"/>
    <property type="evidence" value="ECO:0007669"/>
    <property type="project" value="UniProtKB-KW"/>
</dbReference>
<dbReference type="GO" id="GO:0046983">
    <property type="term" value="F:protein dimerization activity"/>
    <property type="evidence" value="ECO:0007669"/>
    <property type="project" value="InterPro"/>
</dbReference>
<dbReference type="GO" id="GO:0043050">
    <property type="term" value="P:nematode pharyngeal pumping"/>
    <property type="evidence" value="ECO:0000315"/>
    <property type="project" value="UniProtKB"/>
</dbReference>
<dbReference type="GO" id="GO:0048665">
    <property type="term" value="P:neuron fate specification"/>
    <property type="evidence" value="ECO:0000315"/>
    <property type="project" value="UniProtKB"/>
</dbReference>
<dbReference type="GO" id="GO:0010628">
    <property type="term" value="P:positive regulation of gene expression"/>
    <property type="evidence" value="ECO:0000315"/>
    <property type="project" value="UniProtKB"/>
</dbReference>
<dbReference type="GO" id="GO:0006355">
    <property type="term" value="P:regulation of DNA-templated transcription"/>
    <property type="evidence" value="ECO:0007669"/>
    <property type="project" value="InterPro"/>
</dbReference>
<dbReference type="GO" id="GO:0007210">
    <property type="term" value="P:serotonin receptor signaling pathway"/>
    <property type="evidence" value="ECO:0000315"/>
    <property type="project" value="UniProtKB"/>
</dbReference>
<dbReference type="CDD" id="cd11391">
    <property type="entry name" value="bHLH_PAS"/>
    <property type="match status" value="1"/>
</dbReference>
<dbReference type="CDD" id="cd00130">
    <property type="entry name" value="PAS"/>
    <property type="match status" value="2"/>
</dbReference>
<dbReference type="Gene3D" id="3.30.450.20">
    <property type="entry name" value="PAS domain"/>
    <property type="match status" value="2"/>
</dbReference>
<dbReference type="InterPro" id="IPR011598">
    <property type="entry name" value="bHLH_dom"/>
</dbReference>
<dbReference type="InterPro" id="IPR000014">
    <property type="entry name" value="PAS"/>
</dbReference>
<dbReference type="InterPro" id="IPR035965">
    <property type="entry name" value="PAS-like_dom_sf"/>
</dbReference>
<dbReference type="InterPro" id="IPR013767">
    <property type="entry name" value="PAS_fold"/>
</dbReference>
<dbReference type="PANTHER" id="PTHR23043">
    <property type="entry name" value="HYPOXIA-INDUCIBLE FACTOR 1 ALPHA"/>
    <property type="match status" value="1"/>
</dbReference>
<dbReference type="PANTHER" id="PTHR23043:SF17">
    <property type="entry name" value="PROTEIN SIMILAR"/>
    <property type="match status" value="1"/>
</dbReference>
<dbReference type="Pfam" id="PF23171">
    <property type="entry name" value="bHLH_HIF1A"/>
    <property type="match status" value="1"/>
</dbReference>
<dbReference type="Pfam" id="PF00989">
    <property type="entry name" value="PAS"/>
    <property type="match status" value="1"/>
</dbReference>
<dbReference type="SMART" id="SM00091">
    <property type="entry name" value="PAS"/>
    <property type="match status" value="2"/>
</dbReference>
<dbReference type="SUPFAM" id="SSF55785">
    <property type="entry name" value="PYP-like sensor domain (PAS domain)"/>
    <property type="match status" value="1"/>
</dbReference>
<dbReference type="PROSITE" id="PS50888">
    <property type="entry name" value="BHLH"/>
    <property type="match status" value="1"/>
</dbReference>
<dbReference type="PROSITE" id="PS50112">
    <property type="entry name" value="PAS"/>
    <property type="match status" value="1"/>
</dbReference>
<accession>P90953</accession>
<accession>Q963J3</accession>
<protein>
    <recommendedName>
        <fullName>Helix-loop-helix 34</fullName>
    </recommendedName>
</protein>
<proteinExistence type="evidence at transcript level"/>
<evidence type="ECO:0000250" key="1">
    <source>
        <dbReference type="UniProtKB" id="Q14190"/>
    </source>
</evidence>
<evidence type="ECO:0000255" key="2">
    <source>
        <dbReference type="PROSITE-ProRule" id="PRU00140"/>
    </source>
</evidence>
<evidence type="ECO:0000255" key="3">
    <source>
        <dbReference type="PROSITE-ProRule" id="PRU00981"/>
    </source>
</evidence>
<evidence type="ECO:0000256" key="4">
    <source>
        <dbReference type="SAM" id="MobiDB-lite"/>
    </source>
</evidence>
<evidence type="ECO:0000269" key="5">
    <source>
    </source>
</evidence>
<evidence type="ECO:0000269" key="6">
    <source>
    </source>
</evidence>
<evidence type="ECO:0000269" key="7">
    <source>
    </source>
</evidence>
<evidence type="ECO:0000305" key="8"/>
<evidence type="ECO:0000312" key="9">
    <source>
        <dbReference type="EMBL" id="CAB03258.2"/>
    </source>
</evidence>
<feature type="chain" id="PRO_0000127443" description="Helix-loop-helix 34">
    <location>
        <begin position="1"/>
        <end position="322"/>
    </location>
</feature>
<feature type="domain" description="bHLH" evidence="3">
    <location>
        <begin position="8"/>
        <end position="62"/>
    </location>
</feature>
<feature type="domain" description="PAS 1" evidence="2 8">
    <location>
        <begin position="82"/>
        <end position="152"/>
    </location>
</feature>
<feature type="domain" description="PAS 2" evidence="1 2">
    <location>
        <begin position="203"/>
        <end position="276"/>
    </location>
</feature>
<feature type="region of interest" description="Disordered" evidence="4">
    <location>
        <begin position="1"/>
        <end position="23"/>
    </location>
</feature>
<feature type="compositionally biased region" description="Basic and acidic residues" evidence="4">
    <location>
        <begin position="1"/>
        <end position="11"/>
    </location>
</feature>
<keyword id="KW-0217">Developmental protein</keyword>
<keyword id="KW-0221">Differentiation</keyword>
<keyword id="KW-0238">DNA-binding</keyword>
<keyword id="KW-0524">Neurogenesis</keyword>
<keyword id="KW-0539">Nucleus</keyword>
<keyword id="KW-1185">Reference proteome</keyword>
<keyword id="KW-0677">Repeat</keyword>
<keyword id="KW-0804">Transcription</keyword>
<keyword id="KW-0805">Transcription regulation</keyword>
<sequence>METNLSEEKQKPSKSQAQQRRQMENYEFSQLANELPLARAISGQHIDKTTMVRLATAYIKLHNIFGQSQRAYSSADYYYGSDSLWTNNHLDLLDGFFVILDRRGDVLYISETISIYLGLSQVEMTGNAMVDYIHEQDINCFNSALNYCDLNWPQMCNVRVKSSLTKRANKDAVRASPGYKVLRLEITMGPNTNTRMIACYPMPTPVLSTVTIPSNSFVIITSIDLHITFADEKAHQLLNNPFYPDSNIKGMSLYSLIDISDSEVISKMHFDIFNLGAYKTPYYRMILNQTSETFYVESNIFRHTSISSKQFNDSITFVSSIL</sequence>
<reference evidence="8" key="1">
    <citation type="journal article" date="2001" name="Proc. Natl. Acad. Sci. U.S.A.">
        <title>The Caenorhabditis elegans hif-1 gene encodes a bHLH-PAS protein that is required for adaptation to hypoxia.</title>
        <authorList>
            <person name="Jiang H."/>
            <person name="Guo R."/>
            <person name="Powell-Coffman J.A."/>
        </authorList>
    </citation>
    <scope>NUCLEOTIDE SEQUENCE [MRNA]</scope>
    <source>
        <strain>Bristol N2</strain>
    </source>
</reference>
<reference key="2">
    <citation type="journal article" date="1998" name="Science">
        <title>Genome sequence of the nematode C. elegans: a platform for investigating biology.</title>
        <authorList>
            <consortium name="The C. elegans sequencing consortium"/>
        </authorList>
    </citation>
    <scope>NUCLEOTIDE SEQUENCE [LARGE SCALE GENOMIC DNA]</scope>
    <source>
        <strain>Bristol N2</strain>
    </source>
</reference>
<reference key="3">
    <citation type="journal article" date="2012" name="Cell Metab.">
        <title>AMP-activated kinase links serotonergic signaling to glutamate release for regulation of feeding behavior in C. elegans.</title>
        <authorList>
            <person name="Cunningham K.A."/>
            <person name="Hua Z."/>
            <person name="Srinivasan S."/>
            <person name="Liu J."/>
            <person name="Lee B.H."/>
            <person name="Edwards R.H."/>
            <person name="Ashrafi K."/>
        </authorList>
    </citation>
    <scope>FUNCTION</scope>
    <scope>TISSUE SPECIFICITY</scope>
</reference>
<reference key="4">
    <citation type="journal article" date="2021" name="Elife">
        <title>The Prop1-like homeobox gene unc-42 specifies the identity of synaptically connected neurons.</title>
        <authorList>
            <person name="Berghoff E.G."/>
            <person name="Glenwinkel L."/>
            <person name="Bhattacharya A."/>
            <person name="Sun H."/>
            <person name="Varol E."/>
            <person name="Mohammadi N."/>
            <person name="Antone A."/>
            <person name="Feng Y."/>
            <person name="Nguyen K."/>
            <person name="Cook S.J."/>
            <person name="Wood J.F."/>
            <person name="Masoudi N."/>
            <person name="Cros C.C."/>
            <person name="Ramadan Y.H."/>
            <person name="Ferkey D.M."/>
            <person name="Hall D.H."/>
            <person name="Hobert O."/>
        </authorList>
    </citation>
    <scope>FUNCTION</scope>
</reference>
<reference key="5">
    <citation type="journal article" date="2021" name="MicroPubl. Biol.">
        <title>The bHLH-PAS gene hlh-34 is expressed in the AVH, not AVJ interneurons.</title>
        <authorList>
            <person name="Cook S.J."/>
            <person name="Vidal B."/>
            <person name="Hobert O."/>
        </authorList>
    </citation>
    <scope>TISSUE SPECIFICITY</scope>
</reference>
<comment type="function">
    <text evidence="1 5 6">Transcription factor (By similarity). Involved in specifying AVH neuron identity, acting in concert with unc-42 (PubMed:34165428). Involved in serotonin-mediated feeding behavior, probably acting by modulating expression of genes involved in glutamate signaling (PubMed:22768843).</text>
</comment>
<comment type="subunit">
    <text evidence="1">Efficient DNA binding requires dimerization with another bHLH protein.</text>
</comment>
<comment type="subcellular location">
    <subcellularLocation>
        <location evidence="3">Nucleus</location>
    </subcellularLocation>
</comment>
<comment type="tissue specificity">
    <text evidence="5 7">Expressed in a small subset of neurons, probably AVJL and AVJR (PubMed:22768843). Expressed in the AVH neurons (PubMed:34604715).</text>
</comment>
<comment type="caution">
    <text evidence="5 7">Was reported to probably be expressed in the AVJL and AVJR neurons (PubMed:22768843). However, this has been claimed to be an anatomical error and that expression is restricted to the AVH neurons (PubMed:34604715).</text>
</comment>
<gene>
    <name type="primary">hlh-34</name>
    <name type="ORF">T01D3.2</name>
</gene>
<name>HLH34_CAEEL</name>